<sequence length="119" mass="13107">MINPNPKRSDEPVFWGLFGAGGMWSAIIAPVMILLVGILLPLGLFPGDALSYERVLAFAQSFIGRVFLFLMIVLPLWCGLHRMHHAMHDLKIHVPAGKWVFYGLAAILTVVTLIGVVTI</sequence>
<accession>B7NG90</accession>
<comment type="function">
    <text evidence="1">Two distinct, membrane-bound, FAD-containing enzymes are responsible for the catalysis of fumarate and succinate interconversion; fumarate reductase is used in anaerobic growth, and succinate dehydrogenase is used in aerobic growth. Anchors the catalytic components of the fumarate reductase complex to the cell inner membrane, binds quinones.</text>
</comment>
<comment type="subunit">
    <text evidence="1">Part of an enzyme complex containing four subunits: a flavoprotein (FrdA), an iron-sulfur protein (FrdB), and two hydrophobic anchor proteins (FrdC and FrdD).</text>
</comment>
<comment type="subcellular location">
    <subcellularLocation>
        <location evidence="1">Cell inner membrane</location>
        <topology evidence="1">Multi-pass membrane protein</topology>
    </subcellularLocation>
</comment>
<comment type="similarity">
    <text evidence="1">Belongs to the FrdD family.</text>
</comment>
<evidence type="ECO:0000255" key="1">
    <source>
        <dbReference type="HAMAP-Rule" id="MF_00709"/>
    </source>
</evidence>
<gene>
    <name evidence="1" type="primary">frdD</name>
    <name type="ordered locus">ECUMN_4687</name>
</gene>
<reference key="1">
    <citation type="journal article" date="2009" name="PLoS Genet.">
        <title>Organised genome dynamics in the Escherichia coli species results in highly diverse adaptive paths.</title>
        <authorList>
            <person name="Touchon M."/>
            <person name="Hoede C."/>
            <person name="Tenaillon O."/>
            <person name="Barbe V."/>
            <person name="Baeriswyl S."/>
            <person name="Bidet P."/>
            <person name="Bingen E."/>
            <person name="Bonacorsi S."/>
            <person name="Bouchier C."/>
            <person name="Bouvet O."/>
            <person name="Calteau A."/>
            <person name="Chiapello H."/>
            <person name="Clermont O."/>
            <person name="Cruveiller S."/>
            <person name="Danchin A."/>
            <person name="Diard M."/>
            <person name="Dossat C."/>
            <person name="Karoui M.E."/>
            <person name="Frapy E."/>
            <person name="Garry L."/>
            <person name="Ghigo J.M."/>
            <person name="Gilles A.M."/>
            <person name="Johnson J."/>
            <person name="Le Bouguenec C."/>
            <person name="Lescat M."/>
            <person name="Mangenot S."/>
            <person name="Martinez-Jehanne V."/>
            <person name="Matic I."/>
            <person name="Nassif X."/>
            <person name="Oztas S."/>
            <person name="Petit M.A."/>
            <person name="Pichon C."/>
            <person name="Rouy Z."/>
            <person name="Ruf C.S."/>
            <person name="Schneider D."/>
            <person name="Tourret J."/>
            <person name="Vacherie B."/>
            <person name="Vallenet D."/>
            <person name="Medigue C."/>
            <person name="Rocha E.P.C."/>
            <person name="Denamur E."/>
        </authorList>
    </citation>
    <scope>NUCLEOTIDE SEQUENCE [LARGE SCALE GENOMIC DNA]</scope>
    <source>
        <strain>UMN026 / ExPEC</strain>
    </source>
</reference>
<proteinExistence type="inferred from homology"/>
<protein>
    <recommendedName>
        <fullName evidence="1">Fumarate reductase subunit D</fullName>
    </recommendedName>
    <alternativeName>
        <fullName evidence="1">Fumarate reductase 13 kDa hydrophobic protein</fullName>
    </alternativeName>
    <alternativeName>
        <fullName evidence="1">Quinol-fumarate reductase subunit D</fullName>
        <shortName evidence="1">QFR subunit D</shortName>
    </alternativeName>
</protein>
<keyword id="KW-0997">Cell inner membrane</keyword>
<keyword id="KW-1003">Cell membrane</keyword>
<keyword id="KW-0472">Membrane</keyword>
<keyword id="KW-0812">Transmembrane</keyword>
<keyword id="KW-1133">Transmembrane helix</keyword>
<organism>
    <name type="scientific">Escherichia coli O17:K52:H18 (strain UMN026 / ExPEC)</name>
    <dbReference type="NCBI Taxonomy" id="585056"/>
    <lineage>
        <taxon>Bacteria</taxon>
        <taxon>Pseudomonadati</taxon>
        <taxon>Pseudomonadota</taxon>
        <taxon>Gammaproteobacteria</taxon>
        <taxon>Enterobacterales</taxon>
        <taxon>Enterobacteriaceae</taxon>
        <taxon>Escherichia</taxon>
    </lineage>
</organism>
<dbReference type="EMBL" id="CU928163">
    <property type="protein sequence ID" value="CAR15802.1"/>
    <property type="molecule type" value="Genomic_DNA"/>
</dbReference>
<dbReference type="RefSeq" id="WP_000609663.1">
    <property type="nucleotide sequence ID" value="NC_011751.1"/>
</dbReference>
<dbReference type="RefSeq" id="YP_002415286.1">
    <property type="nucleotide sequence ID" value="NC_011751.1"/>
</dbReference>
<dbReference type="SMR" id="B7NG90"/>
<dbReference type="STRING" id="585056.ECUMN_4687"/>
<dbReference type="GeneID" id="75169672"/>
<dbReference type="KEGG" id="eum:ECUMN_4687"/>
<dbReference type="PATRIC" id="fig|585056.7.peg.4852"/>
<dbReference type="HOGENOM" id="CLU_168367_0_0_6"/>
<dbReference type="Proteomes" id="UP000007097">
    <property type="component" value="Chromosome"/>
</dbReference>
<dbReference type="GO" id="GO:0045283">
    <property type="term" value="C:fumarate reductase complex"/>
    <property type="evidence" value="ECO:0007669"/>
    <property type="project" value="UniProtKB-UniRule"/>
</dbReference>
<dbReference type="GO" id="GO:0005886">
    <property type="term" value="C:plasma membrane"/>
    <property type="evidence" value="ECO:0007669"/>
    <property type="project" value="UniProtKB-SubCell"/>
</dbReference>
<dbReference type="GO" id="GO:0000104">
    <property type="term" value="F:succinate dehydrogenase activity"/>
    <property type="evidence" value="ECO:0007669"/>
    <property type="project" value="UniProtKB-UniRule"/>
</dbReference>
<dbReference type="GO" id="GO:0006106">
    <property type="term" value="P:fumarate metabolic process"/>
    <property type="evidence" value="ECO:0007669"/>
    <property type="project" value="InterPro"/>
</dbReference>
<dbReference type="CDD" id="cd00547">
    <property type="entry name" value="QFR_TypeD_subunitD"/>
    <property type="match status" value="1"/>
</dbReference>
<dbReference type="FunFam" id="1.20.1300.10:FF:000002">
    <property type="entry name" value="Fumarate reductase subunit D"/>
    <property type="match status" value="1"/>
</dbReference>
<dbReference type="Gene3D" id="1.20.1300.10">
    <property type="entry name" value="Fumarate reductase/succinate dehydrogenase, transmembrane subunit"/>
    <property type="match status" value="1"/>
</dbReference>
<dbReference type="HAMAP" id="MF_00709">
    <property type="entry name" value="Fumarate_red_D"/>
    <property type="match status" value="1"/>
</dbReference>
<dbReference type="InterPro" id="IPR003418">
    <property type="entry name" value="Fumarate_red_D"/>
</dbReference>
<dbReference type="InterPro" id="IPR034804">
    <property type="entry name" value="SQR/QFR_C/D"/>
</dbReference>
<dbReference type="NCBIfam" id="NF003977">
    <property type="entry name" value="PRK05470.1-1"/>
    <property type="match status" value="1"/>
</dbReference>
<dbReference type="Pfam" id="PF02313">
    <property type="entry name" value="Fumarate_red_D"/>
    <property type="match status" value="1"/>
</dbReference>
<dbReference type="PIRSF" id="PIRSF000179">
    <property type="entry name" value="FrdD"/>
    <property type="match status" value="1"/>
</dbReference>
<dbReference type="SUPFAM" id="SSF81343">
    <property type="entry name" value="Fumarate reductase respiratory complex transmembrane subunits"/>
    <property type="match status" value="1"/>
</dbReference>
<feature type="chain" id="PRO_1000132401" description="Fumarate reductase subunit D">
    <location>
        <begin position="1"/>
        <end position="119"/>
    </location>
</feature>
<feature type="transmembrane region" description="Helical" evidence="1">
    <location>
        <begin position="26"/>
        <end position="46"/>
    </location>
</feature>
<feature type="transmembrane region" description="Helical" evidence="1">
    <location>
        <begin position="55"/>
        <end position="75"/>
    </location>
</feature>
<feature type="transmembrane region" description="Helical" evidence="1">
    <location>
        <begin position="99"/>
        <end position="119"/>
    </location>
</feature>
<name>FRDD_ECOLU</name>